<organism>
    <name type="scientific">Psilotum nudum</name>
    <name type="common">Whisk fern</name>
    <name type="synonym">Lycopodium nudum</name>
    <dbReference type="NCBI Taxonomy" id="3240"/>
    <lineage>
        <taxon>Eukaryota</taxon>
        <taxon>Viridiplantae</taxon>
        <taxon>Streptophyta</taxon>
        <taxon>Embryophyta</taxon>
        <taxon>Tracheophyta</taxon>
        <taxon>Polypodiopsida</taxon>
        <taxon>Ophioglossidae</taxon>
        <taxon>Psilotales</taxon>
        <taxon>Psilotaceae</taxon>
        <taxon>Psilotum</taxon>
    </lineage>
</organism>
<sequence>MQNRNKNNWMKKWVIRSISILIILNIIAWPSISYAYPIFAQQSYENPREATGRIVCANCHLAKKPVDIEVPQSVFPNTVFEAVVKIPYDKQIKQVLGNGKKGGINVGAVLILPEGFELAPYNRIPAEMKDKIGDLALFQNYRPDKRNIIVIGPVPGKAYSEIVFPLISPDPATNKEVHFLKYPIYLGGNRGRGQIYPDGSKSNNTIYNASIAGKVTKILRREKGGYEITIEDTLEGRRVVDIVPPGPELIISEGEFIKIDQPLTNNPNLGGFGQGDTEIVLQNPLRIQGLLLFFVSVIMAQILLVLKKKQFEKVQLAEMNL</sequence>
<dbReference type="EMBL" id="AP004638">
    <property type="protein sequence ID" value="BAB84229.1"/>
    <property type="molecule type" value="Genomic_DNA"/>
</dbReference>
<dbReference type="RefSeq" id="NP_569642.1">
    <property type="nucleotide sequence ID" value="NC_003386.1"/>
</dbReference>
<dbReference type="SMR" id="Q8WI07"/>
<dbReference type="GeneID" id="2545127"/>
<dbReference type="GO" id="GO:0009535">
    <property type="term" value="C:chloroplast thylakoid membrane"/>
    <property type="evidence" value="ECO:0007669"/>
    <property type="project" value="UniProtKB-SubCell"/>
</dbReference>
<dbReference type="GO" id="GO:0009055">
    <property type="term" value="F:electron transfer activity"/>
    <property type="evidence" value="ECO:0007669"/>
    <property type="project" value="UniProtKB-UniRule"/>
</dbReference>
<dbReference type="GO" id="GO:0020037">
    <property type="term" value="F:heme binding"/>
    <property type="evidence" value="ECO:0007669"/>
    <property type="project" value="InterPro"/>
</dbReference>
<dbReference type="GO" id="GO:0005506">
    <property type="term" value="F:iron ion binding"/>
    <property type="evidence" value="ECO:0007669"/>
    <property type="project" value="InterPro"/>
</dbReference>
<dbReference type="GO" id="GO:0015979">
    <property type="term" value="P:photosynthesis"/>
    <property type="evidence" value="ECO:0007669"/>
    <property type="project" value="UniProtKB-UniRule"/>
</dbReference>
<dbReference type="FunFam" id="1.20.5.700:FF:000001">
    <property type="entry name" value="Cytochrome f"/>
    <property type="match status" value="1"/>
</dbReference>
<dbReference type="FunFam" id="2.40.50.100:FF:000007">
    <property type="entry name" value="Cytochrome f"/>
    <property type="match status" value="1"/>
</dbReference>
<dbReference type="FunFam" id="2.60.40.830:FF:000001">
    <property type="entry name" value="Cytochrome f"/>
    <property type="match status" value="1"/>
</dbReference>
<dbReference type="Gene3D" id="2.40.50.100">
    <property type="match status" value="1"/>
</dbReference>
<dbReference type="Gene3D" id="2.60.40.830">
    <property type="entry name" value="Cytochrome f large domain"/>
    <property type="match status" value="1"/>
</dbReference>
<dbReference type="Gene3D" id="1.20.5.700">
    <property type="entry name" value="Single helix bin"/>
    <property type="match status" value="1"/>
</dbReference>
<dbReference type="HAMAP" id="MF_00610">
    <property type="entry name" value="Cytb6_f_cytF"/>
    <property type="match status" value="1"/>
</dbReference>
<dbReference type="InterPro" id="IPR024058">
    <property type="entry name" value="Cyt-f_TM"/>
</dbReference>
<dbReference type="InterPro" id="IPR002325">
    <property type="entry name" value="Cyt_f"/>
</dbReference>
<dbReference type="InterPro" id="IPR024094">
    <property type="entry name" value="Cyt_f_lg_dom"/>
</dbReference>
<dbReference type="InterPro" id="IPR036826">
    <property type="entry name" value="Cyt_f_lg_dom_sf"/>
</dbReference>
<dbReference type="InterPro" id="IPR011054">
    <property type="entry name" value="Rudment_hybrid_motif"/>
</dbReference>
<dbReference type="PANTHER" id="PTHR33288">
    <property type="match status" value="1"/>
</dbReference>
<dbReference type="PANTHER" id="PTHR33288:SF10">
    <property type="entry name" value="CYTOCHROME F"/>
    <property type="match status" value="1"/>
</dbReference>
<dbReference type="Pfam" id="PF01333">
    <property type="entry name" value="Apocytochr_F_C"/>
    <property type="match status" value="1"/>
</dbReference>
<dbReference type="Pfam" id="PF16639">
    <property type="entry name" value="Apocytochr_F_N"/>
    <property type="match status" value="1"/>
</dbReference>
<dbReference type="PRINTS" id="PR00610">
    <property type="entry name" value="CYTOCHROMEF"/>
</dbReference>
<dbReference type="SUPFAM" id="SSF103431">
    <property type="entry name" value="Cytochrome f subunit of the cytochrome b6f complex, transmembrane anchor"/>
    <property type="match status" value="1"/>
</dbReference>
<dbReference type="SUPFAM" id="SSF49441">
    <property type="entry name" value="Cytochrome f, large domain"/>
    <property type="match status" value="1"/>
</dbReference>
<dbReference type="SUPFAM" id="SSF51246">
    <property type="entry name" value="Rudiment single hybrid motif"/>
    <property type="match status" value="1"/>
</dbReference>
<dbReference type="PROSITE" id="PS51010">
    <property type="entry name" value="CYTF"/>
    <property type="match status" value="1"/>
</dbReference>
<comment type="function">
    <text evidence="2">Component of the cytochrome b6-f complex, which mediates electron transfer between photosystem II (PSII) and photosystem I (PSI), cyclic electron flow around PSI, and state transitions.</text>
</comment>
<comment type="cofactor">
    <cofactor evidence="2">
        <name>heme</name>
        <dbReference type="ChEBI" id="CHEBI:30413"/>
    </cofactor>
    <text evidence="2">Binds 1 heme group covalently.</text>
</comment>
<comment type="subunit">
    <text evidence="1">The 4 large subunits of the cytochrome b6-f complex are cytochrome b6, subunit IV (17 kDa polypeptide, petD), cytochrome f and the Rieske protein, while the 4 small subunits are PetG, PetL, PetM and PetN. The complex functions as a dimer (By similarity).</text>
</comment>
<comment type="subcellular location">
    <subcellularLocation>
        <location evidence="2">Plastid</location>
        <location evidence="2">Chloroplast thylakoid membrane</location>
        <topology evidence="2">Single-pass membrane protein</topology>
    </subcellularLocation>
</comment>
<comment type="similarity">
    <text evidence="2">Belongs to the cytochrome f family.</text>
</comment>
<evidence type="ECO:0000250" key="1"/>
<evidence type="ECO:0000255" key="2">
    <source>
        <dbReference type="HAMAP-Rule" id="MF_00610"/>
    </source>
</evidence>
<reference key="1">
    <citation type="journal article" date="2004" name="Mol. Biol. Evol.">
        <title>Chloroplast phylogeny indicates that bryophytes are monophyletic.</title>
        <authorList>
            <person name="Nishiyama T."/>
            <person name="Wolf P.G."/>
            <person name="Kugita M."/>
            <person name="Sinclair R.B."/>
            <person name="Sugita M."/>
            <person name="Sugiura C."/>
            <person name="Wakasugi T."/>
            <person name="Yamada K."/>
            <person name="Yoshinaga K."/>
            <person name="Yamaguchi K."/>
            <person name="Ueda K."/>
            <person name="Hasebe M."/>
        </authorList>
    </citation>
    <scope>NUCLEOTIDE SEQUENCE [LARGE SCALE GENOMIC DNA]</scope>
    <source>
        <strain>Kingyoku</strain>
    </source>
</reference>
<feature type="signal peptide" evidence="2">
    <location>
        <begin position="1"/>
        <end position="35"/>
    </location>
</feature>
<feature type="chain" id="PRO_0000023834" description="Cytochrome f">
    <location>
        <begin position="36"/>
        <end position="321"/>
    </location>
</feature>
<feature type="transmembrane region" description="Helical" evidence="2">
    <location>
        <begin position="287"/>
        <end position="306"/>
    </location>
</feature>
<feature type="binding site" description="axial binding residue" evidence="2">
    <location>
        <position position="36"/>
    </location>
    <ligand>
        <name>heme</name>
        <dbReference type="ChEBI" id="CHEBI:30413"/>
    </ligand>
    <ligandPart>
        <name>Fe</name>
        <dbReference type="ChEBI" id="CHEBI:18248"/>
    </ligandPart>
</feature>
<feature type="binding site" description="covalent" evidence="2">
    <location>
        <position position="56"/>
    </location>
    <ligand>
        <name>heme</name>
        <dbReference type="ChEBI" id="CHEBI:30413"/>
    </ligand>
</feature>
<feature type="binding site" description="covalent" evidence="2">
    <location>
        <position position="59"/>
    </location>
    <ligand>
        <name>heme</name>
        <dbReference type="ChEBI" id="CHEBI:30413"/>
    </ligand>
</feature>
<feature type="binding site" description="axial binding residue" evidence="2">
    <location>
        <position position="60"/>
    </location>
    <ligand>
        <name>heme</name>
        <dbReference type="ChEBI" id="CHEBI:30413"/>
    </ligand>
    <ligandPart>
        <name>Fe</name>
        <dbReference type="ChEBI" id="CHEBI:18248"/>
    </ligandPart>
</feature>
<name>CYF_PSINU</name>
<accession>Q8WI07</accession>
<proteinExistence type="inferred from homology"/>
<keyword id="KW-0150">Chloroplast</keyword>
<keyword id="KW-0249">Electron transport</keyword>
<keyword id="KW-0349">Heme</keyword>
<keyword id="KW-0408">Iron</keyword>
<keyword id="KW-0472">Membrane</keyword>
<keyword id="KW-0479">Metal-binding</keyword>
<keyword id="KW-0602">Photosynthesis</keyword>
<keyword id="KW-0934">Plastid</keyword>
<keyword id="KW-0732">Signal</keyword>
<keyword id="KW-0793">Thylakoid</keyword>
<keyword id="KW-0812">Transmembrane</keyword>
<keyword id="KW-1133">Transmembrane helix</keyword>
<keyword id="KW-0813">Transport</keyword>
<protein>
    <recommendedName>
        <fullName evidence="2">Cytochrome f</fullName>
    </recommendedName>
</protein>
<gene>
    <name evidence="2" type="primary">petA</name>
</gene>
<geneLocation type="chloroplast"/>